<protein>
    <recommendedName>
        <fullName evidence="1">Acetyl-coenzyme A carboxylase carboxyl transferase subunit alpha</fullName>
        <shortName evidence="1">ACCase subunit alpha</shortName>
        <shortName evidence="1">Acetyl-CoA carboxylase carboxyltransferase subunit alpha</shortName>
        <ecNumber evidence="1">2.1.3.15</ecNumber>
    </recommendedName>
</protein>
<name>ACCA_RHOP5</name>
<feature type="chain" id="PRO_1000062665" description="Acetyl-coenzyme A carboxylase carboxyl transferase subunit alpha">
    <location>
        <begin position="1"/>
        <end position="320"/>
    </location>
</feature>
<feature type="domain" description="CoA carboxyltransferase C-terminal" evidence="2">
    <location>
        <begin position="42"/>
        <end position="295"/>
    </location>
</feature>
<reference key="1">
    <citation type="submission" date="2006-09" db="EMBL/GenBank/DDBJ databases">
        <title>Complete sequence of Rhodopseudomonas palustris BisA53.</title>
        <authorList>
            <consortium name="US DOE Joint Genome Institute"/>
            <person name="Copeland A."/>
            <person name="Lucas S."/>
            <person name="Lapidus A."/>
            <person name="Barry K."/>
            <person name="Detter J.C."/>
            <person name="Glavina del Rio T."/>
            <person name="Hammon N."/>
            <person name="Israni S."/>
            <person name="Dalin E."/>
            <person name="Tice H."/>
            <person name="Pitluck S."/>
            <person name="Chain P."/>
            <person name="Malfatti S."/>
            <person name="Shin M."/>
            <person name="Vergez L."/>
            <person name="Schmutz J."/>
            <person name="Larimer F."/>
            <person name="Land M."/>
            <person name="Hauser L."/>
            <person name="Pelletier D.A."/>
            <person name="Kyrpides N."/>
            <person name="Kim E."/>
            <person name="Harwood C.S."/>
            <person name="Oda Y."/>
            <person name="Richardson P."/>
        </authorList>
    </citation>
    <scope>NUCLEOTIDE SEQUENCE [LARGE SCALE GENOMIC DNA]</scope>
    <source>
        <strain>BisA53</strain>
    </source>
</reference>
<organism>
    <name type="scientific">Rhodopseudomonas palustris (strain BisA53)</name>
    <dbReference type="NCBI Taxonomy" id="316055"/>
    <lineage>
        <taxon>Bacteria</taxon>
        <taxon>Pseudomonadati</taxon>
        <taxon>Pseudomonadota</taxon>
        <taxon>Alphaproteobacteria</taxon>
        <taxon>Hyphomicrobiales</taxon>
        <taxon>Nitrobacteraceae</taxon>
        <taxon>Rhodopseudomonas</taxon>
    </lineage>
</organism>
<keyword id="KW-0067">ATP-binding</keyword>
<keyword id="KW-0963">Cytoplasm</keyword>
<keyword id="KW-0275">Fatty acid biosynthesis</keyword>
<keyword id="KW-0276">Fatty acid metabolism</keyword>
<keyword id="KW-0444">Lipid biosynthesis</keyword>
<keyword id="KW-0443">Lipid metabolism</keyword>
<keyword id="KW-0547">Nucleotide-binding</keyword>
<keyword id="KW-0808">Transferase</keyword>
<comment type="function">
    <text evidence="1">Component of the acetyl coenzyme A carboxylase (ACC) complex. First, biotin carboxylase catalyzes the carboxylation of biotin on its carrier protein (BCCP) and then the CO(2) group is transferred by the carboxyltransferase to acetyl-CoA to form malonyl-CoA.</text>
</comment>
<comment type="catalytic activity">
    <reaction evidence="1">
        <text>N(6)-carboxybiotinyl-L-lysyl-[protein] + acetyl-CoA = N(6)-biotinyl-L-lysyl-[protein] + malonyl-CoA</text>
        <dbReference type="Rhea" id="RHEA:54728"/>
        <dbReference type="Rhea" id="RHEA-COMP:10505"/>
        <dbReference type="Rhea" id="RHEA-COMP:10506"/>
        <dbReference type="ChEBI" id="CHEBI:57288"/>
        <dbReference type="ChEBI" id="CHEBI:57384"/>
        <dbReference type="ChEBI" id="CHEBI:83144"/>
        <dbReference type="ChEBI" id="CHEBI:83145"/>
        <dbReference type="EC" id="2.1.3.15"/>
    </reaction>
</comment>
<comment type="pathway">
    <text evidence="1">Lipid metabolism; malonyl-CoA biosynthesis; malonyl-CoA from acetyl-CoA: step 1/1.</text>
</comment>
<comment type="subunit">
    <text evidence="1">Acetyl-CoA carboxylase is a heterohexamer composed of biotin carboxyl carrier protein (AccB), biotin carboxylase (AccC) and two subunits each of ACCase subunit alpha (AccA) and ACCase subunit beta (AccD).</text>
</comment>
<comment type="subcellular location">
    <subcellularLocation>
        <location evidence="1">Cytoplasm</location>
    </subcellularLocation>
</comment>
<comment type="similarity">
    <text evidence="1">Belongs to the AccA family.</text>
</comment>
<evidence type="ECO:0000255" key="1">
    <source>
        <dbReference type="HAMAP-Rule" id="MF_00823"/>
    </source>
</evidence>
<evidence type="ECO:0000255" key="2">
    <source>
        <dbReference type="PROSITE-ProRule" id="PRU01137"/>
    </source>
</evidence>
<dbReference type="EC" id="2.1.3.15" evidence="1"/>
<dbReference type="EMBL" id="CP000463">
    <property type="protein sequence ID" value="ABJ04101.1"/>
    <property type="molecule type" value="Genomic_DNA"/>
</dbReference>
<dbReference type="SMR" id="Q07VD3"/>
<dbReference type="STRING" id="316055.RPE_0140"/>
<dbReference type="KEGG" id="rpe:RPE_0140"/>
<dbReference type="eggNOG" id="COG0825">
    <property type="taxonomic scope" value="Bacteria"/>
</dbReference>
<dbReference type="HOGENOM" id="CLU_015486_0_2_5"/>
<dbReference type="OrthoDB" id="9808023at2"/>
<dbReference type="UniPathway" id="UPA00655">
    <property type="reaction ID" value="UER00711"/>
</dbReference>
<dbReference type="GO" id="GO:0009317">
    <property type="term" value="C:acetyl-CoA carboxylase complex"/>
    <property type="evidence" value="ECO:0007669"/>
    <property type="project" value="InterPro"/>
</dbReference>
<dbReference type="GO" id="GO:0003989">
    <property type="term" value="F:acetyl-CoA carboxylase activity"/>
    <property type="evidence" value="ECO:0007669"/>
    <property type="project" value="InterPro"/>
</dbReference>
<dbReference type="GO" id="GO:0005524">
    <property type="term" value="F:ATP binding"/>
    <property type="evidence" value="ECO:0007669"/>
    <property type="project" value="UniProtKB-KW"/>
</dbReference>
<dbReference type="GO" id="GO:0016743">
    <property type="term" value="F:carboxyl- or carbamoyltransferase activity"/>
    <property type="evidence" value="ECO:0007669"/>
    <property type="project" value="UniProtKB-UniRule"/>
</dbReference>
<dbReference type="GO" id="GO:0006633">
    <property type="term" value="P:fatty acid biosynthetic process"/>
    <property type="evidence" value="ECO:0007669"/>
    <property type="project" value="UniProtKB-KW"/>
</dbReference>
<dbReference type="GO" id="GO:2001295">
    <property type="term" value="P:malonyl-CoA biosynthetic process"/>
    <property type="evidence" value="ECO:0007669"/>
    <property type="project" value="UniProtKB-UniRule"/>
</dbReference>
<dbReference type="Gene3D" id="3.90.226.10">
    <property type="entry name" value="2-enoyl-CoA Hydratase, Chain A, domain 1"/>
    <property type="match status" value="1"/>
</dbReference>
<dbReference type="HAMAP" id="MF_00823">
    <property type="entry name" value="AcetylCoA_CT_alpha"/>
    <property type="match status" value="1"/>
</dbReference>
<dbReference type="InterPro" id="IPR001095">
    <property type="entry name" value="Acetyl_CoA_COase_a_su"/>
</dbReference>
<dbReference type="InterPro" id="IPR029045">
    <property type="entry name" value="ClpP/crotonase-like_dom_sf"/>
</dbReference>
<dbReference type="InterPro" id="IPR011763">
    <property type="entry name" value="COA_CT_C"/>
</dbReference>
<dbReference type="NCBIfam" id="TIGR00513">
    <property type="entry name" value="accA"/>
    <property type="match status" value="1"/>
</dbReference>
<dbReference type="NCBIfam" id="NF041504">
    <property type="entry name" value="AccA_sub"/>
    <property type="match status" value="1"/>
</dbReference>
<dbReference type="NCBIfam" id="NF004344">
    <property type="entry name" value="PRK05724.1"/>
    <property type="match status" value="1"/>
</dbReference>
<dbReference type="PANTHER" id="PTHR42853">
    <property type="entry name" value="ACETYL-COENZYME A CARBOXYLASE CARBOXYL TRANSFERASE SUBUNIT ALPHA"/>
    <property type="match status" value="1"/>
</dbReference>
<dbReference type="PANTHER" id="PTHR42853:SF3">
    <property type="entry name" value="ACETYL-COENZYME A CARBOXYLASE CARBOXYL TRANSFERASE SUBUNIT ALPHA, CHLOROPLASTIC"/>
    <property type="match status" value="1"/>
</dbReference>
<dbReference type="Pfam" id="PF03255">
    <property type="entry name" value="ACCA"/>
    <property type="match status" value="1"/>
</dbReference>
<dbReference type="PRINTS" id="PR01069">
    <property type="entry name" value="ACCCTRFRASEA"/>
</dbReference>
<dbReference type="SUPFAM" id="SSF52096">
    <property type="entry name" value="ClpP/crotonase"/>
    <property type="match status" value="1"/>
</dbReference>
<dbReference type="PROSITE" id="PS50989">
    <property type="entry name" value="COA_CT_CTER"/>
    <property type="match status" value="1"/>
</dbReference>
<gene>
    <name evidence="1" type="primary">accA</name>
    <name type="ordered locus">RPE_0140</name>
</gene>
<accession>Q07VD3</accession>
<sequence>MPDPMRSYLDFEKPVAELDSKIDELHALAAGGSNIGEEIAKIEEKALAALTELYAALTPWQKTQVARHPQRPHCVDYIEGLITEFTPLAGDRKFGEDEALIGGFGRFRGESVCVLGQEKGFSTETRLKHNFGMARPEGYRKAVRLMEMADRFGLPVLSLVDTAGAYPGIGAEERGQAEAIARSTEACLKLGVPNVAVVIGEGGSGGAIAIATANKVLMLEHAIYSVISPEAASSILWRDSSKAQEAATSMKITAQDLLRFGVIDQILTEPRGGAHRDSAAMIAKAGDAIAKSFADLSSLDSDAIRAQRRQKFLDIGRKLG</sequence>
<proteinExistence type="inferred from homology"/>